<protein>
    <recommendedName>
        <fullName evidence="1">Hydroxyethylthiazole kinase</fullName>
        <ecNumber evidence="1">2.7.1.50</ecNumber>
    </recommendedName>
    <alternativeName>
        <fullName evidence="1">4-methyl-5-beta-hydroxyethylthiazole kinase</fullName>
        <shortName evidence="1">TH kinase</shortName>
        <shortName evidence="1">Thz kinase</shortName>
    </alternativeName>
</protein>
<organism>
    <name type="scientific">Leuconostoc citreum (strain KM20)</name>
    <dbReference type="NCBI Taxonomy" id="349519"/>
    <lineage>
        <taxon>Bacteria</taxon>
        <taxon>Bacillati</taxon>
        <taxon>Bacillota</taxon>
        <taxon>Bacilli</taxon>
        <taxon>Lactobacillales</taxon>
        <taxon>Lactobacillaceae</taxon>
        <taxon>Leuconostoc</taxon>
    </lineage>
</organism>
<reference key="1">
    <citation type="journal article" date="2008" name="J. Bacteriol.">
        <title>Complete genome sequence of Leuconostoc citreum KM20.</title>
        <authorList>
            <person name="Kim J.F."/>
            <person name="Jeong H."/>
            <person name="Lee J.-S."/>
            <person name="Choi S.-H."/>
            <person name="Ha M."/>
            <person name="Hur C.-G."/>
            <person name="Kim J.-S."/>
            <person name="Lee S."/>
            <person name="Park H.-S."/>
            <person name="Park Y.-H."/>
            <person name="Oh T.K."/>
        </authorList>
    </citation>
    <scope>NUCLEOTIDE SEQUENCE [LARGE SCALE GENOMIC DNA]</scope>
    <source>
        <strain>KM20</strain>
    </source>
</reference>
<proteinExistence type="inferred from homology"/>
<keyword id="KW-0067">ATP-binding</keyword>
<keyword id="KW-0418">Kinase</keyword>
<keyword id="KW-0460">Magnesium</keyword>
<keyword id="KW-0479">Metal-binding</keyword>
<keyword id="KW-0547">Nucleotide-binding</keyword>
<keyword id="KW-1185">Reference proteome</keyword>
<keyword id="KW-0784">Thiamine biosynthesis</keyword>
<keyword id="KW-0808">Transferase</keyword>
<sequence>MKLSTLNETTPLVFNYANYVTPQFVANAVNVIGGSPIMAREVAEFSDLVAVSDAVVVNTGTWRRAELLETVKLIQIANQTQTVVVLDPVAVGIPSRSVPVQELLTNSKVDIIRGNAAEIAWFAGIDFASHGIDAVGSGNIEQIAQLAANKTGAIIAMSGPSDVISDGKTTRVLPVNVPLLASNVGTGDALSAIIGAFNGDEISLDNTVRAMAMMKLAGLTASHQVTTPGYFANQVLDELYLLSESKLETFIAKEVKKYE</sequence>
<feature type="chain" id="PRO_0000383880" description="Hydroxyethylthiazole kinase">
    <location>
        <begin position="1"/>
        <end position="259"/>
    </location>
</feature>
<feature type="binding site" evidence="1">
    <location>
        <position position="38"/>
    </location>
    <ligand>
        <name>substrate</name>
    </ligand>
</feature>
<feature type="binding site" evidence="1">
    <location>
        <position position="113"/>
    </location>
    <ligand>
        <name>ATP</name>
        <dbReference type="ChEBI" id="CHEBI:30616"/>
    </ligand>
</feature>
<feature type="binding site" evidence="1">
    <location>
        <position position="158"/>
    </location>
    <ligand>
        <name>ATP</name>
        <dbReference type="ChEBI" id="CHEBI:30616"/>
    </ligand>
</feature>
<feature type="binding site" evidence="1">
    <location>
        <position position="185"/>
    </location>
    <ligand>
        <name>substrate</name>
    </ligand>
</feature>
<accession>B1MX61</accession>
<comment type="function">
    <text evidence="1">Catalyzes the phosphorylation of the hydroxyl group of 4-methyl-5-beta-hydroxyethylthiazole (THZ).</text>
</comment>
<comment type="catalytic activity">
    <reaction evidence="1">
        <text>5-(2-hydroxyethyl)-4-methylthiazole + ATP = 4-methyl-5-(2-phosphooxyethyl)-thiazole + ADP + H(+)</text>
        <dbReference type="Rhea" id="RHEA:24212"/>
        <dbReference type="ChEBI" id="CHEBI:15378"/>
        <dbReference type="ChEBI" id="CHEBI:17957"/>
        <dbReference type="ChEBI" id="CHEBI:30616"/>
        <dbReference type="ChEBI" id="CHEBI:58296"/>
        <dbReference type="ChEBI" id="CHEBI:456216"/>
        <dbReference type="EC" id="2.7.1.50"/>
    </reaction>
</comment>
<comment type="cofactor">
    <cofactor evidence="1">
        <name>Mg(2+)</name>
        <dbReference type="ChEBI" id="CHEBI:18420"/>
    </cofactor>
</comment>
<comment type="pathway">
    <text evidence="1">Cofactor biosynthesis; thiamine diphosphate biosynthesis; 4-methyl-5-(2-phosphoethyl)-thiazole from 5-(2-hydroxyethyl)-4-methylthiazole: step 1/1.</text>
</comment>
<comment type="similarity">
    <text evidence="1">Belongs to the Thz kinase family.</text>
</comment>
<evidence type="ECO:0000255" key="1">
    <source>
        <dbReference type="HAMAP-Rule" id="MF_00228"/>
    </source>
</evidence>
<dbReference type="EC" id="2.7.1.50" evidence="1"/>
<dbReference type="EMBL" id="DQ489736">
    <property type="protein sequence ID" value="ACA82113.1"/>
    <property type="molecule type" value="Genomic_DNA"/>
</dbReference>
<dbReference type="RefSeq" id="WP_012305048.1">
    <property type="nucleotide sequence ID" value="NC_010471.1"/>
</dbReference>
<dbReference type="SMR" id="B1MX61"/>
<dbReference type="STRING" id="349519.LCK_00280"/>
<dbReference type="KEGG" id="lci:LCK_00280"/>
<dbReference type="eggNOG" id="COG2145">
    <property type="taxonomic scope" value="Bacteria"/>
</dbReference>
<dbReference type="HOGENOM" id="CLU_019943_0_0_9"/>
<dbReference type="OrthoDB" id="9778146at2"/>
<dbReference type="UniPathway" id="UPA00060">
    <property type="reaction ID" value="UER00139"/>
</dbReference>
<dbReference type="Proteomes" id="UP000002166">
    <property type="component" value="Chromosome"/>
</dbReference>
<dbReference type="GO" id="GO:0005524">
    <property type="term" value="F:ATP binding"/>
    <property type="evidence" value="ECO:0007669"/>
    <property type="project" value="UniProtKB-UniRule"/>
</dbReference>
<dbReference type="GO" id="GO:0004417">
    <property type="term" value="F:hydroxyethylthiazole kinase activity"/>
    <property type="evidence" value="ECO:0007669"/>
    <property type="project" value="UniProtKB-UniRule"/>
</dbReference>
<dbReference type="GO" id="GO:0000287">
    <property type="term" value="F:magnesium ion binding"/>
    <property type="evidence" value="ECO:0007669"/>
    <property type="project" value="UniProtKB-UniRule"/>
</dbReference>
<dbReference type="GO" id="GO:0009228">
    <property type="term" value="P:thiamine biosynthetic process"/>
    <property type="evidence" value="ECO:0007669"/>
    <property type="project" value="UniProtKB-KW"/>
</dbReference>
<dbReference type="GO" id="GO:0009229">
    <property type="term" value="P:thiamine diphosphate biosynthetic process"/>
    <property type="evidence" value="ECO:0007669"/>
    <property type="project" value="UniProtKB-UniRule"/>
</dbReference>
<dbReference type="CDD" id="cd01170">
    <property type="entry name" value="THZ_kinase"/>
    <property type="match status" value="1"/>
</dbReference>
<dbReference type="Gene3D" id="3.40.1190.20">
    <property type="match status" value="1"/>
</dbReference>
<dbReference type="HAMAP" id="MF_00228">
    <property type="entry name" value="Thz_kinase"/>
    <property type="match status" value="1"/>
</dbReference>
<dbReference type="InterPro" id="IPR000417">
    <property type="entry name" value="Hyethyz_kinase"/>
</dbReference>
<dbReference type="InterPro" id="IPR029056">
    <property type="entry name" value="Ribokinase-like"/>
</dbReference>
<dbReference type="NCBIfam" id="NF006830">
    <property type="entry name" value="PRK09355.1"/>
    <property type="match status" value="1"/>
</dbReference>
<dbReference type="Pfam" id="PF02110">
    <property type="entry name" value="HK"/>
    <property type="match status" value="1"/>
</dbReference>
<dbReference type="PIRSF" id="PIRSF000513">
    <property type="entry name" value="Thz_kinase"/>
    <property type="match status" value="1"/>
</dbReference>
<dbReference type="PRINTS" id="PR01099">
    <property type="entry name" value="HYETHTZKNASE"/>
</dbReference>
<dbReference type="SUPFAM" id="SSF53613">
    <property type="entry name" value="Ribokinase-like"/>
    <property type="match status" value="1"/>
</dbReference>
<gene>
    <name evidence="1" type="primary">thiM</name>
    <name type="ordered locus">LCK_00280</name>
</gene>
<name>THIM_LEUCK</name>